<accession>P0DUD0</accession>
<accession>P31498</accession>
<accession>Q663G8</accession>
<accession>Q6J1F6</accession>
<comment type="function">
    <text evidence="1 4 6">Serine/threonine-protein acetyltransferase translocated into infected cells, which inhibits the host immune response and induces cell death by mediating acetylation of target proteins (PubMed:22520462, PubMed:9535085). Inhibits the MAPK and NF-kappa-B signaling pathways by acetylating protein-kinases such as MAP2K1, MAP2K6, MAP3K7/TAK1 and I-kappa-B kinase (CHUK/IKKA and IKBKB) on serine and threonine residues critical for their activation by phosphorylation, thereby preventing protein-kinase activation (By similarity). Promotes pyroptosis, a programmed cell death, in host cells by mediating acetylation of MAP3K7/TAK1: MAP3K7/TAK1 inactivation triggers activation of caspase-8 (CASP8), followed by CASP8-dependent cleavage of gasdermin-D (GSDMD) and induction of pyroptosis (By similarity). Also able to induce intestinal barrier dysfunction by acetylating and inhibiting host protein-kinases RIPK2/RICK and MAP3K7/TAK1, thereby promoting cell death (PubMed:22520462).</text>
</comment>
<comment type="catalytic activity">
    <reaction evidence="4">
        <text>L-threonyl-[protein] + acetyl-CoA = O-acetyl-L-threonyl-[protein] + CoA</text>
        <dbReference type="Rhea" id="RHEA:65340"/>
        <dbReference type="Rhea" id="RHEA-COMP:11060"/>
        <dbReference type="Rhea" id="RHEA-COMP:16780"/>
        <dbReference type="ChEBI" id="CHEBI:30013"/>
        <dbReference type="ChEBI" id="CHEBI:57287"/>
        <dbReference type="ChEBI" id="CHEBI:57288"/>
        <dbReference type="ChEBI" id="CHEBI:141025"/>
    </reaction>
    <physiologicalReaction direction="left-to-right" evidence="4">
        <dbReference type="Rhea" id="RHEA:65341"/>
    </physiologicalReaction>
</comment>
<comment type="catalytic activity">
    <reaction evidence="4">
        <text>L-seryl-[protein] + acetyl-CoA = O-acetyl-L-seryl-[protein] + CoA</text>
        <dbReference type="Rhea" id="RHEA:59392"/>
        <dbReference type="Rhea" id="RHEA-COMP:9863"/>
        <dbReference type="Rhea" id="RHEA-COMP:15352"/>
        <dbReference type="ChEBI" id="CHEBI:29999"/>
        <dbReference type="ChEBI" id="CHEBI:57287"/>
        <dbReference type="ChEBI" id="CHEBI:57288"/>
        <dbReference type="ChEBI" id="CHEBI:141128"/>
    </reaction>
    <physiologicalReaction direction="left-to-right" evidence="4">
        <dbReference type="Rhea" id="RHEA:59393"/>
    </physiologicalReaction>
</comment>
<comment type="cofactor">
    <cofactor evidence="2">
        <name>1D-myo-inositol hexakisphosphate</name>
        <dbReference type="ChEBI" id="CHEBI:58130"/>
    </cofactor>
</comment>
<comment type="activity regulation">
    <text evidence="3">1D-myo-inositol hexakisphosphate activates protein-acetyltransferase activity via an allosteric mechanism: 1D-myo-inositol hexakisphosphate-binding induces a conformational rearrangement that stimulates the interaction with acetyl-CoA.</text>
</comment>
<comment type="subcellular location">
    <subcellularLocation>
        <location evidence="5 6">Secreted</location>
    </subcellularLocation>
    <text evidence="6">Secreted via type III secretion system (T3SS).</text>
</comment>
<comment type="induction">
    <text evidence="5">At 37 degrees Celsius in the absence of calcium.</text>
</comment>
<comment type="similarity">
    <text evidence="8">Belongs to the acetyltransferase YopJ family.</text>
</comment>
<comment type="sequence caution" evidence="8">
    <conflict type="frameshift">
        <sequence resource="EMBL-CDS" id="AAA27659"/>
    </conflict>
</comment>
<comment type="sequence caution" evidence="8">
    <conflict type="frameshift">
        <sequence resource="EMBL-CDS" id="AAA68488"/>
    </conflict>
</comment>
<geneLocation type="plasmid">
    <name>pIB1</name>
</geneLocation>
<name>YOPJ_YERPY</name>
<dbReference type="EC" id="2.3.1.-" evidence="4"/>
<dbReference type="EMBL" id="L33833">
    <property type="protein sequence ID" value="AAA68488.1"/>
    <property type="status" value="ALT_FRAME"/>
    <property type="molecule type" value="Genomic_DNA"/>
</dbReference>
<dbReference type="EMBL" id="AY606230">
    <property type="protein sequence ID" value="AAT28340.1"/>
    <property type="molecule type" value="Genomic_DNA"/>
</dbReference>
<dbReference type="EMBL" id="M58506">
    <property type="protein sequence ID" value="AAA27659.1"/>
    <property type="status" value="ALT_FRAME"/>
    <property type="molecule type" value="Genomic_DNA"/>
</dbReference>
<dbReference type="SMR" id="P0DUD0"/>
<dbReference type="DIP" id="DIP-61317N"/>
<dbReference type="PHI-base" id="PHI:11899"/>
<dbReference type="GO" id="GO:0005576">
    <property type="term" value="C:extracellular region"/>
    <property type="evidence" value="ECO:0007669"/>
    <property type="project" value="UniProtKB-SubCell"/>
</dbReference>
<dbReference type="GO" id="GO:0016413">
    <property type="term" value="F:O-acetyltransferase activity"/>
    <property type="evidence" value="ECO:0000314"/>
    <property type="project" value="UniProtKB"/>
</dbReference>
<dbReference type="GO" id="GO:0090729">
    <property type="term" value="F:toxin activity"/>
    <property type="evidence" value="ECO:0000314"/>
    <property type="project" value="UniProtKB"/>
</dbReference>
<dbReference type="GO" id="GO:0030919">
    <property type="term" value="P:peptidyl-serine O-acetylation"/>
    <property type="evidence" value="ECO:0000314"/>
    <property type="project" value="UniProtKB"/>
</dbReference>
<dbReference type="GO" id="GO:0120258">
    <property type="term" value="P:peptidyl-threonine O-acetylation"/>
    <property type="evidence" value="ECO:0000314"/>
    <property type="project" value="UniProtKB"/>
</dbReference>
<dbReference type="GO" id="GO:0070432">
    <property type="term" value="P:regulation of nucleotide-binding oligomerization domain containing 2 signaling pathway"/>
    <property type="evidence" value="ECO:0000314"/>
    <property type="project" value="UniProtKB"/>
</dbReference>
<dbReference type="GO" id="GO:0052042">
    <property type="term" value="P:symbiont-mediated activation of host programmed cell death"/>
    <property type="evidence" value="ECO:0000314"/>
    <property type="project" value="UniProtKB"/>
</dbReference>
<dbReference type="InterPro" id="IPR005083">
    <property type="entry name" value="YopJ-like"/>
</dbReference>
<dbReference type="NCBIfam" id="NF011898">
    <property type="entry name" value="PRK15371.1"/>
    <property type="match status" value="1"/>
</dbReference>
<dbReference type="NCBIfam" id="NF040632">
    <property type="entry name" value="YopJ_YopP_only"/>
    <property type="match status" value="1"/>
</dbReference>
<dbReference type="Pfam" id="PF03421">
    <property type="entry name" value="Acetyltransf_14"/>
    <property type="match status" value="1"/>
</dbReference>
<gene>
    <name evidence="7" type="primary">yopJ</name>
    <name type="ordered locus">pYV0098</name>
</gene>
<keyword id="KW-0012">Acyltransferase</keyword>
<keyword id="KW-0021">Allosteric enzyme</keyword>
<keyword id="KW-0903">Direct protein sequencing</keyword>
<keyword id="KW-0614">Plasmid</keyword>
<keyword id="KW-0964">Secreted</keyword>
<keyword id="KW-0808">Transferase</keyword>
<keyword id="KW-0843">Virulence</keyword>
<protein>
    <recommendedName>
        <fullName evidence="8">Serine/threonine-protein acetyltransferase YopJ</fullName>
        <ecNumber evidence="4">2.3.1.-</ecNumber>
    </recommendedName>
    <alternativeName>
        <fullName evidence="8">Virulence factor YopJ</fullName>
    </alternativeName>
</protein>
<sequence length="288" mass="32487">MIGPISQINISGGLSEKETSSLISNEELKNIITQLETDISDGSWFHKNYSRMDVEVMPALVIQANNKYPEMNLNLVTSPLDLSIEIKNVIENGVRSSRFIINMGEGGIHFSVIDYKHINGKTSLILFEPANFNSMGPAMLAIRTKTAIERYQLPDCHFSMVEMDIQRSSSECGIFSFALAKKLYIERDSLLKIHEDNIKGILSDGENPLPHDKLDPYLPVTFYKHTQGKKRLNEYLNTNPQGVGTVVNKKNETIVNRFDNNKSIVDGKELSVSVHKKRIAEYKTLLKV</sequence>
<feature type="chain" id="PRO_0000066368" description="Serine/threonine-protein acetyltransferase YopJ">
    <location>
        <begin position="1"/>
        <end position="288"/>
    </location>
</feature>
<feature type="active site" evidence="3">
    <location>
        <position position="109"/>
    </location>
</feature>
<feature type="active site" evidence="3">
    <location>
        <position position="128"/>
    </location>
</feature>
<feature type="active site" evidence="9">
    <location>
        <position position="172"/>
    </location>
</feature>
<feature type="binding site" evidence="3">
    <location>
        <position position="109"/>
    </location>
    <ligand>
        <name>CoA</name>
        <dbReference type="ChEBI" id="CHEBI:57287"/>
    </ligand>
</feature>
<feature type="binding site" evidence="3">
    <location>
        <begin position="167"/>
        <end position="168"/>
    </location>
    <ligand>
        <name>CoA</name>
        <dbReference type="ChEBI" id="CHEBI:57287"/>
    </ligand>
</feature>
<feature type="binding site" evidence="3">
    <location>
        <begin position="182"/>
        <end position="185"/>
    </location>
    <ligand>
        <name>1D-myo-inositol hexakisphosphate</name>
        <dbReference type="ChEBI" id="CHEBI:58130"/>
    </ligand>
</feature>
<feature type="binding site" evidence="3">
    <location>
        <begin position="224"/>
        <end position="225"/>
    </location>
    <ligand>
        <name>1D-myo-inositol hexakisphosphate</name>
        <dbReference type="ChEBI" id="CHEBI:58130"/>
    </ligand>
</feature>
<feature type="binding site" evidence="3">
    <location>
        <begin position="227"/>
        <end position="230"/>
    </location>
    <ligand>
        <name>CoA</name>
        <dbReference type="ChEBI" id="CHEBI:57287"/>
    </ligand>
</feature>
<feature type="binding site" evidence="3">
    <location>
        <position position="257"/>
    </location>
    <ligand>
        <name>1D-myo-inositol hexakisphosphate</name>
        <dbReference type="ChEBI" id="CHEBI:58130"/>
    </ligand>
</feature>
<feature type="binding site" evidence="3">
    <location>
        <begin position="266"/>
        <end position="270"/>
    </location>
    <ligand>
        <name>CoA</name>
        <dbReference type="ChEBI" id="CHEBI:57287"/>
    </ligand>
</feature>
<feature type="mutagenesis site" description="Abolished acetyltransferase activity." evidence="4">
    <original>C</original>
    <variation>A</variation>
    <location>
        <position position="172"/>
    </location>
</feature>
<reference key="1">
    <citation type="journal article" date="1994" name="J. Bacteriol.">
        <title>Characterization of the operon encoding the YpkA Ser/Thr protein kinase and the YopJ protein of Yersinia pseudotuberculosis.</title>
        <authorList>
            <person name="Galyov E.E."/>
            <person name="Haakansson S."/>
            <person name="Wolf-Watz H."/>
        </authorList>
    </citation>
    <scope>NUCLEOTIDE SEQUENCE [GENOMIC DNA]</scope>
    <scope>PROTEIN SEQUENCE OF 1-11</scope>
    <scope>SUBCELLULAR LOCATION</scope>
    <scope>INDUCTION</scope>
    <source>
        <strain>YPIII / Serotype O:3</strain>
        <plasmid>pIB1</plasmid>
    </source>
</reference>
<reference key="2">
    <citation type="submission" date="2004-04" db="EMBL/GenBank/DDBJ databases">
        <authorList>
            <person name="Orth K."/>
            <person name="Palmer L.E."/>
            <person name="Bao Z.Q."/>
            <person name="Stewart S."/>
            <person name="Rudolph A.E."/>
            <person name="Bliska J.B."/>
            <person name="Dixon J.E."/>
        </authorList>
    </citation>
    <scope>NUCLEOTIDE SEQUENCE [GENOMIC DNA]</scope>
    <source>
        <strain>YPIII / Serotype O:3</strain>
    </source>
</reference>
<reference key="3">
    <citation type="journal article" date="1991" name="Infect. Immun.">
        <title>Genetic analysis of homology between the virulence plasmids of Salmonella dublin and Yersinia pseudotuberculosis.</title>
        <authorList>
            <person name="Krause M."/>
            <person name="Harwood J."/>
            <person name="Fierer J."/>
            <person name="Guiney D."/>
        </authorList>
    </citation>
    <scope>NUCLEOTIDE SEQUENCE [GENOMIC DNA] OF 42-264</scope>
    <source>
        <plasmid>pIB1</plasmid>
    </source>
</reference>
<reference key="4">
    <citation type="journal article" date="1998" name="Mol. Microbiol.">
        <title>YopJ of Yersinia pseudotuberculosis is required for the inhibition of macrophage TNF-alpha production and downregulation of the MAP kinases p38 and JNK.</title>
        <authorList>
            <person name="Palmer L.E."/>
            <person name="Hobbie S."/>
            <person name="Galan J.E."/>
            <person name="Bliska J.B."/>
        </authorList>
    </citation>
    <scope>FUNCTION</scope>
    <scope>SUBCELLULAR LOCATION</scope>
    <source>
        <strain>YPIII / Serotype O:3</strain>
    </source>
</reference>
<reference key="5">
    <citation type="journal article" date="2012" name="Cell Host Microbe">
        <title>Yersinia pseudotuberculosis effector YopJ subverts the Nod2/RICK/TAK1 pathway and activates caspase-1 to induce intestinal barrier dysfunction.</title>
        <authorList>
            <person name="Meinzer U."/>
            <person name="Barreau F."/>
            <person name="Esmiol-Welterlin S."/>
            <person name="Jung C."/>
            <person name="Villard C."/>
            <person name="Leger T."/>
            <person name="Ben-Mkaddem S."/>
            <person name="Berrebi D."/>
            <person name="Dussaillant M."/>
            <person name="Alnabhani Z."/>
            <person name="Roy M."/>
            <person name="Bonacorsi S."/>
            <person name="Wolf-Watz H."/>
            <person name="Perroy J."/>
            <person name="Ollendorff V."/>
            <person name="Hugot J.P."/>
        </authorList>
    </citation>
    <scope>FUNCTION</scope>
    <scope>CATALYTIC ACTIVITY</scope>
    <scope>MUTAGENESIS OF CYS-172</scope>
    <source>
        <strain>YPIII / Serotype O:3</strain>
    </source>
</reference>
<organism>
    <name type="scientific">Yersinia pseudotuberculosis serotype O:3 (strain YPIII)</name>
    <dbReference type="NCBI Taxonomy" id="502800"/>
    <lineage>
        <taxon>Bacteria</taxon>
        <taxon>Pseudomonadati</taxon>
        <taxon>Pseudomonadota</taxon>
        <taxon>Gammaproteobacteria</taxon>
        <taxon>Enterobacterales</taxon>
        <taxon>Yersiniaceae</taxon>
        <taxon>Yersinia</taxon>
    </lineage>
</organism>
<proteinExistence type="evidence at protein level"/>
<evidence type="ECO:0000250" key="1">
    <source>
        <dbReference type="UniProtKB" id="A0A0N9NCU6"/>
    </source>
</evidence>
<evidence type="ECO:0000250" key="2">
    <source>
        <dbReference type="UniProtKB" id="O68718"/>
    </source>
</evidence>
<evidence type="ECO:0000250" key="3">
    <source>
        <dbReference type="UniProtKB" id="Q6VE93"/>
    </source>
</evidence>
<evidence type="ECO:0000269" key="4">
    <source>
    </source>
</evidence>
<evidence type="ECO:0000269" key="5">
    <source>
    </source>
</evidence>
<evidence type="ECO:0000269" key="6">
    <source>
    </source>
</evidence>
<evidence type="ECO:0000303" key="7">
    <source>
    </source>
</evidence>
<evidence type="ECO:0000305" key="8"/>
<evidence type="ECO:0000305" key="9">
    <source>
    </source>
</evidence>